<proteinExistence type="inferred from homology"/>
<evidence type="ECO:0000255" key="1">
    <source>
        <dbReference type="HAMAP-Rule" id="MF_00082"/>
    </source>
</evidence>
<reference key="1">
    <citation type="submission" date="2006-01" db="EMBL/GenBank/DDBJ databases">
        <title>Complete sequence of Anaeromyxobacter dehalogenans 2CP-C.</title>
        <authorList>
            <person name="Copeland A."/>
            <person name="Lucas S."/>
            <person name="Lapidus A."/>
            <person name="Barry K."/>
            <person name="Detter J.C."/>
            <person name="Glavina T."/>
            <person name="Hammon N."/>
            <person name="Israni S."/>
            <person name="Pitluck S."/>
            <person name="Brettin T."/>
            <person name="Bruce D."/>
            <person name="Han C."/>
            <person name="Tapia R."/>
            <person name="Gilna P."/>
            <person name="Kiss H."/>
            <person name="Schmutz J."/>
            <person name="Larimer F."/>
            <person name="Land M."/>
            <person name="Kyrpides N."/>
            <person name="Anderson I."/>
            <person name="Sanford R.A."/>
            <person name="Ritalahti K.M."/>
            <person name="Thomas H.S."/>
            <person name="Kirby J.R."/>
            <person name="Zhulin I.B."/>
            <person name="Loeffler F.E."/>
            <person name="Richardson P."/>
        </authorList>
    </citation>
    <scope>NUCLEOTIDE SEQUENCE [LARGE SCALE GENOMIC DNA]</scope>
    <source>
        <strain>2CP-C</strain>
    </source>
</reference>
<gene>
    <name evidence="1" type="primary">argB</name>
    <name type="ordered locus">Adeh_0172</name>
</gene>
<sequence length="270" mass="28343">MKTIVLKLGGEIVHSPELDLVARDLRTLVDGWNRVAIVHGGGPQATALQKRLGLETRMVAGRRYTDEATLEVMKYVVAGQLNVDLCARLLANGVMPVGLHGASGHAVQATRRPPRVMQGAGPEPVDLGLVGDVVGFNLPLLGDLFERRYVPVLACLGCDDAGQALNINGDTVASQLAGALRADALVLVTSTPGVLRDVKDPSSRIPRITRAEFERLVADGTISGGMIPKLEESFEVLRGGARSVVILGKLSPGDLVAAVLEPGSAGTVLE</sequence>
<dbReference type="EC" id="2.7.2.8" evidence="1"/>
<dbReference type="EMBL" id="CP000251">
    <property type="protein sequence ID" value="ABC79949.1"/>
    <property type="molecule type" value="Genomic_DNA"/>
</dbReference>
<dbReference type="RefSeq" id="WP_011419232.1">
    <property type="nucleotide sequence ID" value="NC_007760.1"/>
</dbReference>
<dbReference type="SMR" id="Q2IMB4"/>
<dbReference type="STRING" id="290397.Adeh_0172"/>
<dbReference type="KEGG" id="ade:Adeh_0172"/>
<dbReference type="eggNOG" id="COG0548">
    <property type="taxonomic scope" value="Bacteria"/>
</dbReference>
<dbReference type="HOGENOM" id="CLU_053680_0_0_7"/>
<dbReference type="OrthoDB" id="9803155at2"/>
<dbReference type="UniPathway" id="UPA00068">
    <property type="reaction ID" value="UER00107"/>
</dbReference>
<dbReference type="Proteomes" id="UP000001935">
    <property type="component" value="Chromosome"/>
</dbReference>
<dbReference type="GO" id="GO:0005737">
    <property type="term" value="C:cytoplasm"/>
    <property type="evidence" value="ECO:0007669"/>
    <property type="project" value="UniProtKB-SubCell"/>
</dbReference>
<dbReference type="GO" id="GO:0003991">
    <property type="term" value="F:acetylglutamate kinase activity"/>
    <property type="evidence" value="ECO:0007669"/>
    <property type="project" value="UniProtKB-UniRule"/>
</dbReference>
<dbReference type="GO" id="GO:0005524">
    <property type="term" value="F:ATP binding"/>
    <property type="evidence" value="ECO:0007669"/>
    <property type="project" value="UniProtKB-UniRule"/>
</dbReference>
<dbReference type="GO" id="GO:0042450">
    <property type="term" value="P:arginine biosynthetic process via ornithine"/>
    <property type="evidence" value="ECO:0007669"/>
    <property type="project" value="UniProtKB-UniRule"/>
</dbReference>
<dbReference type="GO" id="GO:0006526">
    <property type="term" value="P:L-arginine biosynthetic process"/>
    <property type="evidence" value="ECO:0007669"/>
    <property type="project" value="UniProtKB-UniPathway"/>
</dbReference>
<dbReference type="CDD" id="cd04238">
    <property type="entry name" value="AAK_NAGK-like"/>
    <property type="match status" value="1"/>
</dbReference>
<dbReference type="Gene3D" id="3.40.1160.10">
    <property type="entry name" value="Acetylglutamate kinase-like"/>
    <property type="match status" value="1"/>
</dbReference>
<dbReference type="HAMAP" id="MF_00082">
    <property type="entry name" value="ArgB"/>
    <property type="match status" value="1"/>
</dbReference>
<dbReference type="InterPro" id="IPR036393">
    <property type="entry name" value="AceGlu_kinase-like_sf"/>
</dbReference>
<dbReference type="InterPro" id="IPR004662">
    <property type="entry name" value="AcgluKinase_fam"/>
</dbReference>
<dbReference type="InterPro" id="IPR037528">
    <property type="entry name" value="ArgB"/>
</dbReference>
<dbReference type="InterPro" id="IPR001048">
    <property type="entry name" value="Asp/Glu/Uridylate_kinase"/>
</dbReference>
<dbReference type="NCBIfam" id="TIGR00761">
    <property type="entry name" value="argB"/>
    <property type="match status" value="1"/>
</dbReference>
<dbReference type="PANTHER" id="PTHR23342">
    <property type="entry name" value="N-ACETYLGLUTAMATE SYNTHASE"/>
    <property type="match status" value="1"/>
</dbReference>
<dbReference type="PANTHER" id="PTHR23342:SF0">
    <property type="entry name" value="N-ACETYLGLUTAMATE SYNTHASE, MITOCHONDRIAL"/>
    <property type="match status" value="1"/>
</dbReference>
<dbReference type="Pfam" id="PF00696">
    <property type="entry name" value="AA_kinase"/>
    <property type="match status" value="1"/>
</dbReference>
<dbReference type="PIRSF" id="PIRSF000728">
    <property type="entry name" value="NAGK"/>
    <property type="match status" value="1"/>
</dbReference>
<dbReference type="SUPFAM" id="SSF53633">
    <property type="entry name" value="Carbamate kinase-like"/>
    <property type="match status" value="1"/>
</dbReference>
<name>ARGB_ANADE</name>
<organism>
    <name type="scientific">Anaeromyxobacter dehalogenans (strain 2CP-C)</name>
    <dbReference type="NCBI Taxonomy" id="290397"/>
    <lineage>
        <taxon>Bacteria</taxon>
        <taxon>Pseudomonadati</taxon>
        <taxon>Myxococcota</taxon>
        <taxon>Myxococcia</taxon>
        <taxon>Myxococcales</taxon>
        <taxon>Cystobacterineae</taxon>
        <taxon>Anaeromyxobacteraceae</taxon>
        <taxon>Anaeromyxobacter</taxon>
    </lineage>
</organism>
<feature type="chain" id="PRO_1000092846" description="Acetylglutamate kinase">
    <location>
        <begin position="1"/>
        <end position="270"/>
    </location>
</feature>
<feature type="binding site" evidence="1">
    <location>
        <begin position="41"/>
        <end position="42"/>
    </location>
    <ligand>
        <name>substrate</name>
    </ligand>
</feature>
<feature type="binding site" evidence="1">
    <location>
        <position position="63"/>
    </location>
    <ligand>
        <name>substrate</name>
    </ligand>
</feature>
<feature type="binding site" evidence="1">
    <location>
        <position position="166"/>
    </location>
    <ligand>
        <name>substrate</name>
    </ligand>
</feature>
<feature type="site" description="Transition state stabilizer" evidence="1">
    <location>
        <position position="7"/>
    </location>
</feature>
<feature type="site" description="Transition state stabilizer" evidence="1">
    <location>
        <position position="229"/>
    </location>
</feature>
<accession>Q2IMB4</accession>
<keyword id="KW-0028">Amino-acid biosynthesis</keyword>
<keyword id="KW-0055">Arginine biosynthesis</keyword>
<keyword id="KW-0067">ATP-binding</keyword>
<keyword id="KW-0963">Cytoplasm</keyword>
<keyword id="KW-0418">Kinase</keyword>
<keyword id="KW-0547">Nucleotide-binding</keyword>
<keyword id="KW-1185">Reference proteome</keyword>
<keyword id="KW-0808">Transferase</keyword>
<comment type="function">
    <text evidence="1">Catalyzes the ATP-dependent phosphorylation of N-acetyl-L-glutamate.</text>
</comment>
<comment type="catalytic activity">
    <reaction evidence="1">
        <text>N-acetyl-L-glutamate + ATP = N-acetyl-L-glutamyl 5-phosphate + ADP</text>
        <dbReference type="Rhea" id="RHEA:14629"/>
        <dbReference type="ChEBI" id="CHEBI:30616"/>
        <dbReference type="ChEBI" id="CHEBI:44337"/>
        <dbReference type="ChEBI" id="CHEBI:57936"/>
        <dbReference type="ChEBI" id="CHEBI:456216"/>
        <dbReference type="EC" id="2.7.2.8"/>
    </reaction>
</comment>
<comment type="pathway">
    <text evidence="1">Amino-acid biosynthesis; L-arginine biosynthesis; N(2)-acetyl-L-ornithine from L-glutamate: step 2/4.</text>
</comment>
<comment type="subcellular location">
    <subcellularLocation>
        <location evidence="1">Cytoplasm</location>
    </subcellularLocation>
</comment>
<comment type="similarity">
    <text evidence="1">Belongs to the acetylglutamate kinase family. ArgB subfamily.</text>
</comment>
<protein>
    <recommendedName>
        <fullName evidence="1">Acetylglutamate kinase</fullName>
        <ecNumber evidence="1">2.7.2.8</ecNumber>
    </recommendedName>
    <alternativeName>
        <fullName evidence="1">N-acetyl-L-glutamate 5-phosphotransferase</fullName>
    </alternativeName>
    <alternativeName>
        <fullName evidence="1">NAG kinase</fullName>
        <shortName evidence="1">NAGK</shortName>
    </alternativeName>
</protein>